<reference key="1">
    <citation type="journal article" date="2002" name="J. Gen. Virol.">
        <title>Sequence of the 3'-terminal end (8.1 kb) of the genome of porcine haemagglutinating encephalomyelitis virus: comparison with other haemagglutinating coronaviruses.</title>
        <authorList>
            <person name="Sasseville A.M.-J."/>
            <person name="Boutin M."/>
            <person name="Gelinas A.-M."/>
            <person name="Dea S."/>
        </authorList>
    </citation>
    <scope>NUCLEOTIDE SEQUENCE [GENOMIC RNA]</scope>
</reference>
<name>HEMA_CVP67</name>
<comment type="function">
    <text evidence="1">Structural protein that makes short spikes at the surface of the virus. Contains receptor binding and receptor-destroying activities. Mediates de-O-acetylation of N-acetyl-4-O-acetylneuraminic acid, which is probably the receptor determinant recognized by the virus on the surface of erythrocytes and susceptible cells. This receptor-destroying activity is important for virus release as it probably helps preventing self-aggregation and ensures the efficient spread of the progeny virus from cell to cell. May serve as a secondary viral attachment protein for initiating infection, the spike protein being the major one. May become a target for both the humoral and the cellular branches of the immune system.</text>
</comment>
<comment type="catalytic activity">
    <reaction evidence="1">
        <text>N-acetyl-9-O-acetylneuraminate + H2O = N-acetylneuraminate + acetate + H(+)</text>
        <dbReference type="Rhea" id="RHEA:22600"/>
        <dbReference type="ChEBI" id="CHEBI:15377"/>
        <dbReference type="ChEBI" id="CHEBI:15378"/>
        <dbReference type="ChEBI" id="CHEBI:28999"/>
        <dbReference type="ChEBI" id="CHEBI:30089"/>
        <dbReference type="ChEBI" id="CHEBI:35418"/>
        <dbReference type="EC" id="3.1.1.53"/>
    </reaction>
</comment>
<comment type="catalytic activity">
    <reaction evidence="1">
        <text>N-acetyl-4-O-acetylneuraminate + H2O = N-acetylneuraminate + acetate + H(+)</text>
        <dbReference type="Rhea" id="RHEA:25564"/>
        <dbReference type="ChEBI" id="CHEBI:15377"/>
        <dbReference type="ChEBI" id="CHEBI:15378"/>
        <dbReference type="ChEBI" id="CHEBI:29006"/>
        <dbReference type="ChEBI" id="CHEBI:30089"/>
        <dbReference type="ChEBI" id="CHEBI:35418"/>
        <dbReference type="EC" id="3.1.1.53"/>
    </reaction>
</comment>
<comment type="subunit">
    <text evidence="1">Homodimer; disulfide-linked. Forms a complex with the M protein in the pre-Golgi. Associates then with S-M complex to form a ternary complex S-M-HE.</text>
</comment>
<comment type="subcellular location">
    <subcellularLocation>
        <location evidence="1">Virion membrane</location>
        <topology evidence="1">Single-pass type I membrane protein</topology>
    </subcellularLocation>
    <subcellularLocation>
        <location evidence="1">Host cell membrane</location>
        <topology evidence="1">Single-pass type I membrane protein</topology>
    </subcellularLocation>
    <text evidence="1">In infected cells becomes incorporated into the envelope of virions during virus assembly at the endoplasmic reticulum and cis Golgi. However, some may escape incorporation into virions and subsequently migrate to the cell surface.</text>
</comment>
<comment type="PTM">
    <text evidence="1">N-glycosylated in the host RER.</text>
</comment>
<comment type="similarity">
    <text evidence="1">Belongs to the influenza type C/coronaviruses hemagglutinin-esterase family.</text>
</comment>
<feature type="signal peptide" evidence="1">
    <location>
        <begin position="1"/>
        <end position="16"/>
    </location>
</feature>
<feature type="chain" id="PRO_0000037149" description="Hemagglutinin-esterase" evidence="1">
    <location>
        <begin position="17"/>
        <end position="424"/>
    </location>
</feature>
<feature type="topological domain" description="Virion surface" evidence="1">
    <location>
        <begin position="17"/>
        <end position="392"/>
    </location>
</feature>
<feature type="transmembrane region" description="Helical" evidence="1">
    <location>
        <begin position="393"/>
        <end position="413"/>
    </location>
</feature>
<feature type="topological domain" description="Intravirion" evidence="1">
    <location>
        <begin position="414"/>
        <end position="424"/>
    </location>
</feature>
<feature type="region of interest" description="Esterase domain 1" evidence="1">
    <location>
        <begin position="7"/>
        <end position="127"/>
    </location>
</feature>
<feature type="region of interest" description="Receptor binding" evidence="1">
    <location>
        <begin position="128"/>
        <end position="266"/>
    </location>
</feature>
<feature type="region of interest" description="Esterase domain 2" evidence="1">
    <location>
        <begin position="267"/>
        <end position="379"/>
    </location>
</feature>
<feature type="active site" description="Nucleophile" evidence="1">
    <location>
        <position position="40"/>
    </location>
</feature>
<feature type="active site" description="Charge relay system" evidence="1">
    <location>
        <position position="326"/>
    </location>
</feature>
<feature type="active site" description="Charge relay system" evidence="1">
    <location>
        <position position="329"/>
    </location>
</feature>
<feature type="glycosylation site" description="N-linked (GlcNAc...) asparagine; by host" evidence="1">
    <location>
        <position position="54"/>
    </location>
</feature>
<feature type="glycosylation site" description="N-linked (GlcNAc...) asparagine; by host" evidence="1">
    <location>
        <position position="89"/>
    </location>
</feature>
<feature type="glycosylation site" description="N-linked (GlcNAc...) asparagine; by host" evidence="1">
    <location>
        <position position="153"/>
    </location>
</feature>
<feature type="glycosylation site" description="N-linked (GlcNAc...) asparagine; by host" evidence="1">
    <location>
        <position position="236"/>
    </location>
</feature>
<feature type="glycosylation site" description="N-linked (GlcNAc...) asparagine; by host" evidence="1">
    <location>
        <position position="301"/>
    </location>
</feature>
<feature type="glycosylation site" description="N-linked (GlcNAc...) asparagine; by host" evidence="1">
    <location>
        <position position="316"/>
    </location>
</feature>
<feature type="glycosylation site" description="N-linked (GlcNAc...) asparagine; by host" evidence="1">
    <location>
        <position position="358"/>
    </location>
</feature>
<feature type="disulfide bond" evidence="1">
    <location>
        <begin position="44"/>
        <end position="65"/>
    </location>
</feature>
<feature type="disulfide bond" evidence="1">
    <location>
        <begin position="113"/>
        <end position="162"/>
    </location>
</feature>
<feature type="disulfide bond" evidence="1">
    <location>
        <begin position="197"/>
        <end position="276"/>
    </location>
</feature>
<feature type="disulfide bond" evidence="1">
    <location>
        <begin position="205"/>
        <end position="249"/>
    </location>
</feature>
<feature type="disulfide bond" evidence="1">
    <location>
        <begin position="307"/>
        <end position="312"/>
    </location>
</feature>
<feature type="disulfide bond" evidence="1">
    <location>
        <begin position="347"/>
        <end position="371"/>
    </location>
</feature>
<proteinExistence type="inferred from homology"/>
<evidence type="ECO:0000255" key="1">
    <source>
        <dbReference type="HAMAP-Rule" id="MF_04207"/>
    </source>
</evidence>
<gene>
    <name evidence="1" type="primary">HE</name>
</gene>
<organismHost>
    <name type="scientific">Sus scrofa</name>
    <name type="common">Pig</name>
    <dbReference type="NCBI Taxonomy" id="9823"/>
</organismHost>
<accession>Q8BB26</accession>
<dbReference type="EC" id="3.1.1.53" evidence="1"/>
<dbReference type="EMBL" id="AY078417">
    <property type="protein sequence ID" value="AAL80030.1"/>
    <property type="molecule type" value="Genomic_RNA"/>
</dbReference>
<dbReference type="SMR" id="Q8BB26"/>
<dbReference type="GlyCosmos" id="Q8BB26">
    <property type="glycosylation" value="7 sites, No reported glycans"/>
</dbReference>
<dbReference type="Proteomes" id="UP000007546">
    <property type="component" value="Genome"/>
</dbReference>
<dbReference type="GO" id="GO:0020002">
    <property type="term" value="C:host cell plasma membrane"/>
    <property type="evidence" value="ECO:0007669"/>
    <property type="project" value="UniProtKB-SubCell"/>
</dbReference>
<dbReference type="GO" id="GO:0016020">
    <property type="term" value="C:membrane"/>
    <property type="evidence" value="ECO:0007669"/>
    <property type="project" value="UniProtKB-UniRule"/>
</dbReference>
<dbReference type="GO" id="GO:0019031">
    <property type="term" value="C:viral envelope"/>
    <property type="evidence" value="ECO:0007669"/>
    <property type="project" value="UniProtKB-UniRule"/>
</dbReference>
<dbReference type="GO" id="GO:0055036">
    <property type="term" value="C:virion membrane"/>
    <property type="evidence" value="ECO:0007669"/>
    <property type="project" value="UniProtKB-SubCell"/>
</dbReference>
<dbReference type="GO" id="GO:0046789">
    <property type="term" value="F:host cell surface receptor binding"/>
    <property type="evidence" value="ECO:0007669"/>
    <property type="project" value="UniProtKB-UniRule"/>
</dbReference>
<dbReference type="GO" id="GO:0106331">
    <property type="term" value="F:sialate 4-O-acetylesterase activity"/>
    <property type="evidence" value="ECO:0007669"/>
    <property type="project" value="RHEA"/>
</dbReference>
<dbReference type="GO" id="GO:0106330">
    <property type="term" value="F:sialate 9-O-acetylesterase activity"/>
    <property type="evidence" value="ECO:0007669"/>
    <property type="project" value="RHEA"/>
</dbReference>
<dbReference type="GO" id="GO:0001681">
    <property type="term" value="F:sialate O-acetylesterase activity"/>
    <property type="evidence" value="ECO:0000250"/>
    <property type="project" value="UniProtKB"/>
</dbReference>
<dbReference type="GO" id="GO:0019064">
    <property type="term" value="P:fusion of virus membrane with host plasma membrane"/>
    <property type="evidence" value="ECO:0007669"/>
    <property type="project" value="UniProtKB-UniRule"/>
</dbReference>
<dbReference type="HAMAP" id="MF_04207">
    <property type="entry name" value="BETA_CORONA_HE"/>
    <property type="match status" value="1"/>
</dbReference>
<dbReference type="InterPro" id="IPR008980">
    <property type="entry name" value="Capsid_hemagglutn"/>
</dbReference>
<dbReference type="InterPro" id="IPR042545">
    <property type="entry name" value="HEMA"/>
</dbReference>
<dbReference type="InterPro" id="IPR007142">
    <property type="entry name" value="Hemagglutn-estrase_core"/>
</dbReference>
<dbReference type="InterPro" id="IPR003860">
    <property type="entry name" value="Hemagglutn-estrase_hemagglutn"/>
</dbReference>
<dbReference type="Pfam" id="PF03996">
    <property type="entry name" value="Hema_esterase"/>
    <property type="match status" value="1"/>
</dbReference>
<dbReference type="Pfam" id="PF02710">
    <property type="entry name" value="Hema_HEFG"/>
    <property type="match status" value="1"/>
</dbReference>
<dbReference type="SUPFAM" id="SSF52266">
    <property type="entry name" value="SGNH hydrolase"/>
    <property type="match status" value="1"/>
</dbReference>
<dbReference type="SUPFAM" id="SSF49818">
    <property type="entry name" value="Viral protein domain"/>
    <property type="match status" value="1"/>
</dbReference>
<sequence length="424" mass="47668">MFLLPRFCLVCSIIGTFGFENPPTNVVSHFNDDWFLFGDSRSDCNHVVNTNPRNYSYMDLNPALCDSGKISSKAGNSIFRSFHFTDFYNYTGEGQQIIFYEGVNFTPYHAFKCTSAGNNDIWMQNKGLFYTQVYKKMAVYRSLTLVNVPYVYNGSAQPTAFCKSGSLILNNPAYIAREANVGDYYYKSEADFSLSGCDEYIVPLCIFNGKFLSNTKYYDDSQYYFNKDTGVIYGLNSTETITTGFDFNCHYLVLPSGNYLAISNELLLTVPTKAICLNKRKVFTPVQVVDSRWNNARQSDNMTAVACQLPYCYFRNSTSNYVGIHDVNHGDAGFTSILSGLLYDSPCFSQQGVFRYDNVSTVWPLFPFGNCPTAASIISSDLPICVYDPLPIILLGILLGVAVIVIVVLLLYFMVDNGIRQHYA</sequence>
<keyword id="KW-1015">Disulfide bond</keyword>
<keyword id="KW-0325">Glycoprotein</keyword>
<keyword id="KW-0348">Hemagglutinin</keyword>
<keyword id="KW-1032">Host cell membrane</keyword>
<keyword id="KW-1043">Host membrane</keyword>
<keyword id="KW-0378">Hydrolase</keyword>
<keyword id="KW-0472">Membrane</keyword>
<keyword id="KW-1185">Reference proteome</keyword>
<keyword id="KW-0732">Signal</keyword>
<keyword id="KW-0812">Transmembrane</keyword>
<keyword id="KW-1133">Transmembrane helix</keyword>
<keyword id="KW-0261">Viral envelope protein</keyword>
<keyword id="KW-0946">Virion</keyword>
<organism>
    <name type="scientific">Porcine hemagglutinating encephalomyelitis virus (strain 67N)</name>
    <name type="common">HEV-67N</name>
    <dbReference type="NCBI Taxonomy" id="230237"/>
    <lineage>
        <taxon>Viruses</taxon>
        <taxon>Riboviria</taxon>
        <taxon>Orthornavirae</taxon>
        <taxon>Pisuviricota</taxon>
        <taxon>Pisoniviricetes</taxon>
        <taxon>Nidovirales</taxon>
        <taxon>Cornidovirineae</taxon>
        <taxon>Coronaviridae</taxon>
        <taxon>Orthocoronavirinae</taxon>
        <taxon>Betacoronavirus</taxon>
        <taxon>Embecovirus</taxon>
        <taxon>Betacoronavirus 1</taxon>
    </lineage>
</organism>
<protein>
    <recommendedName>
        <fullName evidence="1">Hemagglutinin-esterase</fullName>
        <shortName evidence="1">HE protein</shortName>
        <ecNumber evidence="1">3.1.1.53</ecNumber>
    </recommendedName>
    <alternativeName>
        <fullName evidence="1">E3 glycoprotein</fullName>
    </alternativeName>
</protein>